<reference key="1">
    <citation type="journal article" date="2006" name="J. Bacteriol.">
        <title>Complete genome sequence of Yersinia pestis strains Antiqua and Nepal516: evidence of gene reduction in an emerging pathogen.</title>
        <authorList>
            <person name="Chain P.S.G."/>
            <person name="Hu P."/>
            <person name="Malfatti S.A."/>
            <person name="Radnedge L."/>
            <person name="Larimer F."/>
            <person name="Vergez L.M."/>
            <person name="Worsham P."/>
            <person name="Chu M.C."/>
            <person name="Andersen G.L."/>
        </authorList>
    </citation>
    <scope>NUCLEOTIDE SEQUENCE [LARGE SCALE GENOMIC DNA]</scope>
    <source>
        <strain>Antiqua</strain>
    </source>
</reference>
<gene>
    <name type="ordered locus">YPA_1510</name>
</gene>
<evidence type="ECO:0000255" key="1">
    <source>
        <dbReference type="HAMAP-Rule" id="MF_01232"/>
    </source>
</evidence>
<evidence type="ECO:0000256" key="2">
    <source>
        <dbReference type="SAM" id="MobiDB-lite"/>
    </source>
</evidence>
<feature type="chain" id="PRO_1000066888" description="UPF0229 protein YPA_1510">
    <location>
        <begin position="1"/>
        <end position="424"/>
    </location>
</feature>
<feature type="region of interest" description="Disordered" evidence="2">
    <location>
        <begin position="84"/>
        <end position="109"/>
    </location>
</feature>
<feature type="compositionally biased region" description="Gly residues" evidence="2">
    <location>
        <begin position="92"/>
        <end position="105"/>
    </location>
</feature>
<comment type="similarity">
    <text evidence="1">Belongs to the UPF0229 family.</text>
</comment>
<accession>Q1C7U5</accession>
<protein>
    <recommendedName>
        <fullName evidence="1">UPF0229 protein YPA_1510</fullName>
    </recommendedName>
</protein>
<proteinExistence type="inferred from homology"/>
<dbReference type="EMBL" id="CP000308">
    <property type="protein sequence ID" value="ABG13477.1"/>
    <property type="molecule type" value="Genomic_DNA"/>
</dbReference>
<dbReference type="RefSeq" id="WP_002216501.1">
    <property type="nucleotide sequence ID" value="NZ_CP009906.1"/>
</dbReference>
<dbReference type="SMR" id="Q1C7U5"/>
<dbReference type="KEGG" id="ypa:YPA_1510"/>
<dbReference type="Proteomes" id="UP000001971">
    <property type="component" value="Chromosome"/>
</dbReference>
<dbReference type="HAMAP" id="MF_01232">
    <property type="entry name" value="UPF0229"/>
    <property type="match status" value="1"/>
</dbReference>
<dbReference type="InterPro" id="IPR006698">
    <property type="entry name" value="UPF0229"/>
</dbReference>
<dbReference type="NCBIfam" id="NF003707">
    <property type="entry name" value="PRK05325.1-2"/>
    <property type="match status" value="1"/>
</dbReference>
<dbReference type="NCBIfam" id="NF003708">
    <property type="entry name" value="PRK05325.1-3"/>
    <property type="match status" value="1"/>
</dbReference>
<dbReference type="PANTHER" id="PTHR30510">
    <property type="entry name" value="UPF0229 PROTEIN YEAH"/>
    <property type="match status" value="1"/>
</dbReference>
<dbReference type="PANTHER" id="PTHR30510:SF2">
    <property type="entry name" value="UPF0229 PROTEIN YEAH"/>
    <property type="match status" value="1"/>
</dbReference>
<dbReference type="Pfam" id="PF04285">
    <property type="entry name" value="DUF444"/>
    <property type="match status" value="1"/>
</dbReference>
<sequence length="424" mass="49080">MGYFIDRRLNGKNKSMVNRQRFLRRYKSQIKQSIADAINKRSVTDIESGESVSIPIDDINEPMFHQGNGGLRHRVHPGNDHFITNDRVDRPQGGGGGGSGQGNAGKDGEGEDEFVFQISKDEYLDLLFEDLALPNLKRNQYKQLAEFKTHRAGYTSNGVPANISVVRSLQNSLARRTAMTASKRRELRELEAALTVLENSEPAQLLEEERLRKAITELKQKIARVPFIDTFDLRYKNYERRPEPSSQAVMFCLMDVSGSMDQATKDMAKRFYILLYLFLSRTYKNVDVVYIRHHTQAKEVDEQEFFYSQETGGTIVSSALKLMDEVVQERYNPAQWNIYAAQASDGDNWADDSPLCHELLAKKILPVVRYYSYIEITRRAHQTLWREYEDLEEKFDNFAIQHIREPEDIYPVFRELFHKQTVDN</sequence>
<organism>
    <name type="scientific">Yersinia pestis bv. Antiqua (strain Antiqua)</name>
    <dbReference type="NCBI Taxonomy" id="360102"/>
    <lineage>
        <taxon>Bacteria</taxon>
        <taxon>Pseudomonadati</taxon>
        <taxon>Pseudomonadota</taxon>
        <taxon>Gammaproteobacteria</taxon>
        <taxon>Enterobacterales</taxon>
        <taxon>Yersiniaceae</taxon>
        <taxon>Yersinia</taxon>
    </lineage>
</organism>
<name>Y1510_YERPA</name>